<accession>B7VJ04</accession>
<evidence type="ECO:0000255" key="1">
    <source>
        <dbReference type="HAMAP-Rule" id="MF_00046"/>
    </source>
</evidence>
<reference key="1">
    <citation type="submission" date="2009-02" db="EMBL/GenBank/DDBJ databases">
        <title>Vibrio splendidus str. LGP32 complete genome.</title>
        <authorList>
            <person name="Mazel D."/>
            <person name="Le Roux F."/>
        </authorList>
    </citation>
    <scope>NUCLEOTIDE SEQUENCE [LARGE SCALE GENOMIC DNA]</scope>
    <source>
        <strain>LGP32</strain>
    </source>
</reference>
<sequence length="486" mass="52608">MTIEHTQDLAQIRAMVPEMRRVKSIHFIGIGGAGMSGIAEVLLNEGYQITGSDIAQNPVTERLVSKGATVYVGHQASNVADASVVVVSTAINEENPEIIAAREARTPIVRRAEMLAELMRFRHGIAVAGTHGKTTTTALVTQIYSEAGLDPTFVNGGLVKSAGTNARLGSSRILIAEADESDASFLHLQPMVSIVTNIEADHMDTYGGDFETLKQTFIDFLHNLPFYGQAVMCVDDPVVRELIPQVSRQVITYGFSEDADIRIENYVQEGQQGKFTVVREGKANLDITLNIPGRHNALNASAAIAVATEDDISDEAILKAMAGTEGTGRRFDHLGEYETGKGVAMLVDDYGHHPTEVDVTIQAARSGWTDKRLVMIFQPHRYSRTRDLYDDFANVLEQVDVLILLDVYSAGEKPIAGADGRSLSRTIRGRGKIDPIFVADINALPSALANVIQGGDLVLTQGAGDVGRVAKQLESLQLDINKMQNA</sequence>
<gene>
    <name evidence="1" type="primary">murC</name>
    <name type="ordered locus">VS_0451</name>
</gene>
<proteinExistence type="inferred from homology"/>
<feature type="chain" id="PRO_1000192120" description="UDP-N-acetylmuramate--L-alanine ligase">
    <location>
        <begin position="1"/>
        <end position="486"/>
    </location>
</feature>
<feature type="binding site" evidence="1">
    <location>
        <begin position="129"/>
        <end position="135"/>
    </location>
    <ligand>
        <name>ATP</name>
        <dbReference type="ChEBI" id="CHEBI:30616"/>
    </ligand>
</feature>
<protein>
    <recommendedName>
        <fullName evidence="1">UDP-N-acetylmuramate--L-alanine ligase</fullName>
        <ecNumber evidence="1">6.3.2.8</ecNumber>
    </recommendedName>
    <alternativeName>
        <fullName evidence="1">UDP-N-acetylmuramoyl-L-alanine synthetase</fullName>
    </alternativeName>
</protein>
<dbReference type="EC" id="6.3.2.8" evidence="1"/>
<dbReference type="EMBL" id="FM954972">
    <property type="protein sequence ID" value="CAV17458.1"/>
    <property type="molecule type" value="Genomic_DNA"/>
</dbReference>
<dbReference type="SMR" id="B7VJ04"/>
<dbReference type="STRING" id="575788.VS_0451"/>
<dbReference type="KEGG" id="vsp:VS_0451"/>
<dbReference type="PATRIC" id="fig|575788.5.peg.1817"/>
<dbReference type="eggNOG" id="COG0773">
    <property type="taxonomic scope" value="Bacteria"/>
</dbReference>
<dbReference type="HOGENOM" id="CLU_028104_2_2_6"/>
<dbReference type="UniPathway" id="UPA00219"/>
<dbReference type="Proteomes" id="UP000009100">
    <property type="component" value="Chromosome 1"/>
</dbReference>
<dbReference type="GO" id="GO:0005737">
    <property type="term" value="C:cytoplasm"/>
    <property type="evidence" value="ECO:0007669"/>
    <property type="project" value="UniProtKB-SubCell"/>
</dbReference>
<dbReference type="GO" id="GO:0005524">
    <property type="term" value="F:ATP binding"/>
    <property type="evidence" value="ECO:0007669"/>
    <property type="project" value="UniProtKB-UniRule"/>
</dbReference>
<dbReference type="GO" id="GO:0008763">
    <property type="term" value="F:UDP-N-acetylmuramate-L-alanine ligase activity"/>
    <property type="evidence" value="ECO:0007669"/>
    <property type="project" value="UniProtKB-UniRule"/>
</dbReference>
<dbReference type="GO" id="GO:0051301">
    <property type="term" value="P:cell division"/>
    <property type="evidence" value="ECO:0007669"/>
    <property type="project" value="UniProtKB-KW"/>
</dbReference>
<dbReference type="GO" id="GO:0071555">
    <property type="term" value="P:cell wall organization"/>
    <property type="evidence" value="ECO:0007669"/>
    <property type="project" value="UniProtKB-KW"/>
</dbReference>
<dbReference type="GO" id="GO:0009252">
    <property type="term" value="P:peptidoglycan biosynthetic process"/>
    <property type="evidence" value="ECO:0007669"/>
    <property type="project" value="UniProtKB-UniRule"/>
</dbReference>
<dbReference type="GO" id="GO:0008360">
    <property type="term" value="P:regulation of cell shape"/>
    <property type="evidence" value="ECO:0007669"/>
    <property type="project" value="UniProtKB-KW"/>
</dbReference>
<dbReference type="FunFam" id="3.40.1190.10:FF:000001">
    <property type="entry name" value="UDP-N-acetylmuramate--L-alanine ligase"/>
    <property type="match status" value="1"/>
</dbReference>
<dbReference type="FunFam" id="3.40.50.720:FF:000046">
    <property type="entry name" value="UDP-N-acetylmuramate--L-alanine ligase"/>
    <property type="match status" value="1"/>
</dbReference>
<dbReference type="Gene3D" id="3.90.190.20">
    <property type="entry name" value="Mur ligase, C-terminal domain"/>
    <property type="match status" value="1"/>
</dbReference>
<dbReference type="Gene3D" id="3.40.1190.10">
    <property type="entry name" value="Mur-like, catalytic domain"/>
    <property type="match status" value="1"/>
</dbReference>
<dbReference type="Gene3D" id="3.40.50.720">
    <property type="entry name" value="NAD(P)-binding Rossmann-like Domain"/>
    <property type="match status" value="1"/>
</dbReference>
<dbReference type="HAMAP" id="MF_00046">
    <property type="entry name" value="MurC"/>
    <property type="match status" value="1"/>
</dbReference>
<dbReference type="InterPro" id="IPR036565">
    <property type="entry name" value="Mur-like_cat_sf"/>
</dbReference>
<dbReference type="InterPro" id="IPR004101">
    <property type="entry name" value="Mur_ligase_C"/>
</dbReference>
<dbReference type="InterPro" id="IPR036615">
    <property type="entry name" value="Mur_ligase_C_dom_sf"/>
</dbReference>
<dbReference type="InterPro" id="IPR013221">
    <property type="entry name" value="Mur_ligase_cen"/>
</dbReference>
<dbReference type="InterPro" id="IPR000713">
    <property type="entry name" value="Mur_ligase_N"/>
</dbReference>
<dbReference type="InterPro" id="IPR050061">
    <property type="entry name" value="MurCDEF_pg_biosynth"/>
</dbReference>
<dbReference type="InterPro" id="IPR005758">
    <property type="entry name" value="UDP-N-AcMur_Ala_ligase_MurC"/>
</dbReference>
<dbReference type="NCBIfam" id="TIGR01082">
    <property type="entry name" value="murC"/>
    <property type="match status" value="1"/>
</dbReference>
<dbReference type="PANTHER" id="PTHR43445:SF3">
    <property type="entry name" value="UDP-N-ACETYLMURAMATE--L-ALANINE LIGASE"/>
    <property type="match status" value="1"/>
</dbReference>
<dbReference type="PANTHER" id="PTHR43445">
    <property type="entry name" value="UDP-N-ACETYLMURAMATE--L-ALANINE LIGASE-RELATED"/>
    <property type="match status" value="1"/>
</dbReference>
<dbReference type="Pfam" id="PF01225">
    <property type="entry name" value="Mur_ligase"/>
    <property type="match status" value="1"/>
</dbReference>
<dbReference type="Pfam" id="PF02875">
    <property type="entry name" value="Mur_ligase_C"/>
    <property type="match status" value="1"/>
</dbReference>
<dbReference type="Pfam" id="PF08245">
    <property type="entry name" value="Mur_ligase_M"/>
    <property type="match status" value="1"/>
</dbReference>
<dbReference type="SUPFAM" id="SSF51984">
    <property type="entry name" value="MurCD N-terminal domain"/>
    <property type="match status" value="1"/>
</dbReference>
<dbReference type="SUPFAM" id="SSF53623">
    <property type="entry name" value="MurD-like peptide ligases, catalytic domain"/>
    <property type="match status" value="1"/>
</dbReference>
<dbReference type="SUPFAM" id="SSF53244">
    <property type="entry name" value="MurD-like peptide ligases, peptide-binding domain"/>
    <property type="match status" value="1"/>
</dbReference>
<comment type="function">
    <text evidence="1">Cell wall formation.</text>
</comment>
<comment type="catalytic activity">
    <reaction evidence="1">
        <text>UDP-N-acetyl-alpha-D-muramate + L-alanine + ATP = UDP-N-acetyl-alpha-D-muramoyl-L-alanine + ADP + phosphate + H(+)</text>
        <dbReference type="Rhea" id="RHEA:23372"/>
        <dbReference type="ChEBI" id="CHEBI:15378"/>
        <dbReference type="ChEBI" id="CHEBI:30616"/>
        <dbReference type="ChEBI" id="CHEBI:43474"/>
        <dbReference type="ChEBI" id="CHEBI:57972"/>
        <dbReference type="ChEBI" id="CHEBI:70757"/>
        <dbReference type="ChEBI" id="CHEBI:83898"/>
        <dbReference type="ChEBI" id="CHEBI:456216"/>
        <dbReference type="EC" id="6.3.2.8"/>
    </reaction>
</comment>
<comment type="pathway">
    <text evidence="1">Cell wall biogenesis; peptidoglycan biosynthesis.</text>
</comment>
<comment type="subcellular location">
    <subcellularLocation>
        <location evidence="1">Cytoplasm</location>
    </subcellularLocation>
</comment>
<comment type="similarity">
    <text evidence="1">Belongs to the MurCDEF family.</text>
</comment>
<keyword id="KW-0067">ATP-binding</keyword>
<keyword id="KW-0131">Cell cycle</keyword>
<keyword id="KW-0132">Cell division</keyword>
<keyword id="KW-0133">Cell shape</keyword>
<keyword id="KW-0961">Cell wall biogenesis/degradation</keyword>
<keyword id="KW-0963">Cytoplasm</keyword>
<keyword id="KW-0436">Ligase</keyword>
<keyword id="KW-0547">Nucleotide-binding</keyword>
<keyword id="KW-0573">Peptidoglycan synthesis</keyword>
<organism>
    <name type="scientific">Vibrio atlanticus (strain LGP32)</name>
    <name type="common">Vibrio splendidus (strain Mel32)</name>
    <dbReference type="NCBI Taxonomy" id="575788"/>
    <lineage>
        <taxon>Bacteria</taxon>
        <taxon>Pseudomonadati</taxon>
        <taxon>Pseudomonadota</taxon>
        <taxon>Gammaproteobacteria</taxon>
        <taxon>Vibrionales</taxon>
        <taxon>Vibrionaceae</taxon>
        <taxon>Vibrio</taxon>
    </lineage>
</organism>
<name>MURC_VIBA3</name>